<gene>
    <name type="primary">nifF</name>
</gene>
<dbReference type="EMBL" id="X81894">
    <property type="protein sequence ID" value="CAA57484.1"/>
    <property type="molecule type" value="Genomic_DNA"/>
</dbReference>
<dbReference type="SMR" id="P71169"/>
<dbReference type="GO" id="GO:0009055">
    <property type="term" value="F:electron transfer activity"/>
    <property type="evidence" value="ECO:0007669"/>
    <property type="project" value="InterPro"/>
</dbReference>
<dbReference type="GO" id="GO:0010181">
    <property type="term" value="F:FMN binding"/>
    <property type="evidence" value="ECO:0007669"/>
    <property type="project" value="InterPro"/>
</dbReference>
<dbReference type="GO" id="GO:0009399">
    <property type="term" value="P:nitrogen fixation"/>
    <property type="evidence" value="ECO:0007669"/>
    <property type="project" value="UniProtKB-KW"/>
</dbReference>
<dbReference type="Gene3D" id="3.40.50.360">
    <property type="match status" value="1"/>
</dbReference>
<dbReference type="InterPro" id="IPR001094">
    <property type="entry name" value="Flavdoxin-like"/>
</dbReference>
<dbReference type="InterPro" id="IPR050619">
    <property type="entry name" value="Flavodoxin"/>
</dbReference>
<dbReference type="InterPro" id="IPR008254">
    <property type="entry name" value="Flavodoxin/NO_synth"/>
</dbReference>
<dbReference type="InterPro" id="IPR001226">
    <property type="entry name" value="Flavodoxin_CS"/>
</dbReference>
<dbReference type="InterPro" id="IPR010086">
    <property type="entry name" value="Flavodoxin_lc"/>
</dbReference>
<dbReference type="InterPro" id="IPR029039">
    <property type="entry name" value="Flavoprotein-like_sf"/>
</dbReference>
<dbReference type="NCBIfam" id="TIGR01752">
    <property type="entry name" value="flav_long"/>
    <property type="match status" value="1"/>
</dbReference>
<dbReference type="NCBIfam" id="NF006739">
    <property type="entry name" value="PRK09267.1-5"/>
    <property type="match status" value="1"/>
</dbReference>
<dbReference type="PANTHER" id="PTHR42809:SF1">
    <property type="entry name" value="FLAVODOXIN 1"/>
    <property type="match status" value="1"/>
</dbReference>
<dbReference type="PANTHER" id="PTHR42809">
    <property type="entry name" value="FLAVODOXIN 2"/>
    <property type="match status" value="1"/>
</dbReference>
<dbReference type="Pfam" id="PF00258">
    <property type="entry name" value="Flavodoxin_1"/>
    <property type="match status" value="1"/>
</dbReference>
<dbReference type="PIRSF" id="PIRSF038996">
    <property type="entry name" value="FldA"/>
    <property type="match status" value="1"/>
</dbReference>
<dbReference type="PRINTS" id="PR00369">
    <property type="entry name" value="FLAVODOXIN"/>
</dbReference>
<dbReference type="SUPFAM" id="SSF52218">
    <property type="entry name" value="Flavoproteins"/>
    <property type="match status" value="1"/>
</dbReference>
<dbReference type="PROSITE" id="PS00201">
    <property type="entry name" value="FLAVODOXIN"/>
    <property type="match status" value="1"/>
</dbReference>
<dbReference type="PROSITE" id="PS50902">
    <property type="entry name" value="FLAVODOXIN_LIKE"/>
    <property type="match status" value="1"/>
</dbReference>
<proteinExistence type="inferred from homology"/>
<feature type="chain" id="PRO_0000171632" description="Flavodoxin">
    <location>
        <begin position="1"/>
        <end position="177"/>
    </location>
</feature>
<feature type="domain" description="Flavodoxin-like" evidence="1">
    <location>
        <begin position="4"/>
        <end position="173"/>
    </location>
</feature>
<sequence length="177" mass="19584">MATIGIFFGSDTGQTRKVAKLIHQKLDGIADAPLDVRRATREQFLSYPVLLLGTPTLGDGELPGVDAGSQYDSWQEFTNTLSEADLSGKTVALFGLGDQLNYSKNFVSAMRILYDLVIARGACVVGNWPREGYKFSFSAALLENNEFVGLPLDQENQYDLTEERIDTWLDKLKQAVL</sequence>
<evidence type="ECO:0000255" key="1">
    <source>
        <dbReference type="PROSITE-ProRule" id="PRU00088"/>
    </source>
</evidence>
<evidence type="ECO:0000305" key="2"/>
<keyword id="KW-0249">Electron transport</keyword>
<keyword id="KW-0285">Flavoprotein</keyword>
<keyword id="KW-0288">FMN</keyword>
<keyword id="KW-0535">Nitrogen fixation</keyword>
<keyword id="KW-0614">Plasmid</keyword>
<keyword id="KW-0813">Transport</keyword>
<organism>
    <name type="scientific">Enterobacter agglomerans</name>
    <name type="common">Erwinia herbicola</name>
    <name type="synonym">Pantoea agglomerans</name>
    <dbReference type="NCBI Taxonomy" id="549"/>
    <lineage>
        <taxon>Bacteria</taxon>
        <taxon>Pseudomonadati</taxon>
        <taxon>Pseudomonadota</taxon>
        <taxon>Gammaproteobacteria</taxon>
        <taxon>Enterobacterales</taxon>
        <taxon>Erwiniaceae</taxon>
        <taxon>Pantoea</taxon>
        <taxon>Pantoea agglomerans group</taxon>
    </lineage>
</organism>
<reference key="1">
    <citation type="submission" date="1996-08" db="EMBL/GenBank/DDBJ databases">
        <authorList>
            <person name="Steibl H.D."/>
            <person name="Siddavattam D."/>
        </authorList>
    </citation>
    <scope>NUCLEOTIDE SEQUENCE [GENOMIC DNA]</scope>
    <source>
        <strain>339</strain>
    </source>
</reference>
<name>FLAW_ENTAG</name>
<accession>P71169</accession>
<protein>
    <recommendedName>
        <fullName>Flavodoxin</fullName>
    </recommendedName>
</protein>
<geneLocation type="plasmid">
    <name>pEA9</name>
</geneLocation>
<comment type="function">
    <text>Low-potential electron donor to a number of redox enzymes. NifF is the electron donor to nitrogenase.</text>
</comment>
<comment type="cofactor">
    <cofactor>
        <name>FMN</name>
        <dbReference type="ChEBI" id="CHEBI:58210"/>
    </cofactor>
</comment>
<comment type="similarity">
    <text evidence="2">Belongs to the flavodoxin family.</text>
</comment>